<sequence>MSTPLDHIRNFSIVAHIDHGKSTLADRLIQLTGGLDTREMKDQVLDSMDIERERGITIKAQTVRLSYKAKNGEDYVLNLIDTPGHVDFAYEVSRSLAACEGSLLVVDASQGVEAQTLANVYQAIDNNHEIVVVLNKIDLPAAEPERVKQQIEEVIGIDASDAVEISAKTGLGIEDVLEAIVNKLPAPKEGDRNAPLKAMLVDSWYDSYLGVIVLVRVIDGVLKKGQTIRMMGTGAKYPVERTGVFTPKMVQVDDLGPGELGFITASIKEVADTRVGDTITEDRRPTENMLSGFKPAQPVVFCGLFPVDAADFEDLRGAMGKLRLNDASFSFEMETSAALGFGFRCGFLGLLHLEIIQERLEREFNLDLITTAPSVVYRLNMTDGTHKELHNPADMPDVVKIASIEEPWIKATIMTPDDYLGAIMKLCQERRGIQIDLTYVGPRAMITYDLPLNEVVFDFYDRLKSISKGYASFDYNLSDYREGDLVKMSILVNEEPVDALSMLVHRSAAEKRGRALCEKLKELIPQHMFKIPIQAAIGGRIVARETISALRKDVTAKCYGGDVTRKRKLLEKQKEGKKRMRQFGKVEIPQEAFIQALKMGDD</sequence>
<comment type="function">
    <text evidence="1">Required for accurate and efficient protein synthesis under certain stress conditions. May act as a fidelity factor of the translation reaction, by catalyzing a one-codon backward translocation of tRNAs on improperly translocated ribosomes. Back-translocation proceeds from a post-translocation (POST) complex to a pre-translocation (PRE) complex, thus giving elongation factor G a second chance to translocate the tRNAs correctly. Binds to ribosomes in a GTP-dependent manner.</text>
</comment>
<comment type="catalytic activity">
    <reaction evidence="1">
        <text>GTP + H2O = GDP + phosphate + H(+)</text>
        <dbReference type="Rhea" id="RHEA:19669"/>
        <dbReference type="ChEBI" id="CHEBI:15377"/>
        <dbReference type="ChEBI" id="CHEBI:15378"/>
        <dbReference type="ChEBI" id="CHEBI:37565"/>
        <dbReference type="ChEBI" id="CHEBI:43474"/>
        <dbReference type="ChEBI" id="CHEBI:58189"/>
        <dbReference type="EC" id="3.6.5.n1"/>
    </reaction>
</comment>
<comment type="subcellular location">
    <subcellularLocation>
        <location evidence="1">Cell inner membrane</location>
        <topology evidence="1">Peripheral membrane protein</topology>
        <orientation evidence="1">Cytoplasmic side</orientation>
    </subcellularLocation>
</comment>
<comment type="similarity">
    <text evidence="1">Belongs to the TRAFAC class translation factor GTPase superfamily. Classic translation factor GTPase family. LepA subfamily.</text>
</comment>
<feature type="chain" id="PRO_1000075124" description="Elongation factor 4">
    <location>
        <begin position="1"/>
        <end position="602"/>
    </location>
</feature>
<feature type="domain" description="tr-type G">
    <location>
        <begin position="6"/>
        <end position="188"/>
    </location>
</feature>
<feature type="binding site" evidence="1">
    <location>
        <begin position="18"/>
        <end position="23"/>
    </location>
    <ligand>
        <name>GTP</name>
        <dbReference type="ChEBI" id="CHEBI:37565"/>
    </ligand>
</feature>
<feature type="binding site" evidence="1">
    <location>
        <begin position="135"/>
        <end position="138"/>
    </location>
    <ligand>
        <name>GTP</name>
        <dbReference type="ChEBI" id="CHEBI:37565"/>
    </ligand>
</feature>
<organism>
    <name type="scientific">Brucella suis (strain ATCC 23445 / NCTC 10510)</name>
    <dbReference type="NCBI Taxonomy" id="470137"/>
    <lineage>
        <taxon>Bacteria</taxon>
        <taxon>Pseudomonadati</taxon>
        <taxon>Pseudomonadota</taxon>
        <taxon>Alphaproteobacteria</taxon>
        <taxon>Hyphomicrobiales</taxon>
        <taxon>Brucellaceae</taxon>
        <taxon>Brucella/Ochrobactrum group</taxon>
        <taxon>Brucella</taxon>
    </lineage>
</organism>
<keyword id="KW-0997">Cell inner membrane</keyword>
<keyword id="KW-1003">Cell membrane</keyword>
<keyword id="KW-0342">GTP-binding</keyword>
<keyword id="KW-0378">Hydrolase</keyword>
<keyword id="KW-0472">Membrane</keyword>
<keyword id="KW-0547">Nucleotide-binding</keyword>
<keyword id="KW-0648">Protein biosynthesis</keyword>
<accession>A9WW49</accession>
<dbReference type="EC" id="3.6.5.n1" evidence="1"/>
<dbReference type="EMBL" id="CP000912">
    <property type="protein sequence ID" value="ABY39985.1"/>
    <property type="molecule type" value="Genomic_DNA"/>
</dbReference>
<dbReference type="RefSeq" id="WP_004687034.1">
    <property type="nucleotide sequence ID" value="NC_010167.1"/>
</dbReference>
<dbReference type="SMR" id="A9WW49"/>
<dbReference type="GeneID" id="97534913"/>
<dbReference type="KEGG" id="bmt:BSUIS_B1034"/>
<dbReference type="HOGENOM" id="CLU_009995_3_3_5"/>
<dbReference type="Proteomes" id="UP000008545">
    <property type="component" value="Chromosome II"/>
</dbReference>
<dbReference type="GO" id="GO:0005886">
    <property type="term" value="C:plasma membrane"/>
    <property type="evidence" value="ECO:0007669"/>
    <property type="project" value="UniProtKB-SubCell"/>
</dbReference>
<dbReference type="GO" id="GO:0005525">
    <property type="term" value="F:GTP binding"/>
    <property type="evidence" value="ECO:0007669"/>
    <property type="project" value="UniProtKB-UniRule"/>
</dbReference>
<dbReference type="GO" id="GO:0003924">
    <property type="term" value="F:GTPase activity"/>
    <property type="evidence" value="ECO:0007669"/>
    <property type="project" value="UniProtKB-UniRule"/>
</dbReference>
<dbReference type="GO" id="GO:0097216">
    <property type="term" value="F:guanosine tetraphosphate binding"/>
    <property type="evidence" value="ECO:0007669"/>
    <property type="project" value="UniProtKB-ARBA"/>
</dbReference>
<dbReference type="GO" id="GO:0043022">
    <property type="term" value="F:ribosome binding"/>
    <property type="evidence" value="ECO:0007669"/>
    <property type="project" value="UniProtKB-UniRule"/>
</dbReference>
<dbReference type="GO" id="GO:0003746">
    <property type="term" value="F:translation elongation factor activity"/>
    <property type="evidence" value="ECO:0007669"/>
    <property type="project" value="UniProtKB-UniRule"/>
</dbReference>
<dbReference type="GO" id="GO:0045727">
    <property type="term" value="P:positive regulation of translation"/>
    <property type="evidence" value="ECO:0007669"/>
    <property type="project" value="UniProtKB-UniRule"/>
</dbReference>
<dbReference type="CDD" id="cd03699">
    <property type="entry name" value="EF4_II"/>
    <property type="match status" value="1"/>
</dbReference>
<dbReference type="CDD" id="cd16260">
    <property type="entry name" value="EF4_III"/>
    <property type="match status" value="1"/>
</dbReference>
<dbReference type="CDD" id="cd01890">
    <property type="entry name" value="LepA"/>
    <property type="match status" value="1"/>
</dbReference>
<dbReference type="CDD" id="cd03709">
    <property type="entry name" value="lepA_C"/>
    <property type="match status" value="1"/>
</dbReference>
<dbReference type="FunFam" id="3.40.50.300:FF:000078">
    <property type="entry name" value="Elongation factor 4"/>
    <property type="match status" value="1"/>
</dbReference>
<dbReference type="FunFam" id="2.40.30.10:FF:000015">
    <property type="entry name" value="Translation factor GUF1, mitochondrial"/>
    <property type="match status" value="1"/>
</dbReference>
<dbReference type="FunFam" id="3.30.70.240:FF:000007">
    <property type="entry name" value="Translation factor GUF1, mitochondrial"/>
    <property type="match status" value="1"/>
</dbReference>
<dbReference type="FunFam" id="3.30.70.2570:FF:000001">
    <property type="entry name" value="Translation factor GUF1, mitochondrial"/>
    <property type="match status" value="1"/>
</dbReference>
<dbReference type="FunFam" id="3.30.70.870:FF:000004">
    <property type="entry name" value="Translation factor GUF1, mitochondrial"/>
    <property type="match status" value="1"/>
</dbReference>
<dbReference type="Gene3D" id="3.30.70.240">
    <property type="match status" value="1"/>
</dbReference>
<dbReference type="Gene3D" id="3.30.70.2570">
    <property type="entry name" value="Elongation factor 4, C-terminal domain"/>
    <property type="match status" value="1"/>
</dbReference>
<dbReference type="Gene3D" id="3.30.70.870">
    <property type="entry name" value="Elongation Factor G (Translational Gtpase), domain 3"/>
    <property type="match status" value="1"/>
</dbReference>
<dbReference type="Gene3D" id="3.40.50.300">
    <property type="entry name" value="P-loop containing nucleotide triphosphate hydrolases"/>
    <property type="match status" value="1"/>
</dbReference>
<dbReference type="Gene3D" id="2.40.30.10">
    <property type="entry name" value="Translation factors"/>
    <property type="match status" value="1"/>
</dbReference>
<dbReference type="HAMAP" id="MF_00071">
    <property type="entry name" value="LepA"/>
    <property type="match status" value="1"/>
</dbReference>
<dbReference type="InterPro" id="IPR006297">
    <property type="entry name" value="EF-4"/>
</dbReference>
<dbReference type="InterPro" id="IPR035647">
    <property type="entry name" value="EFG_III/V"/>
</dbReference>
<dbReference type="InterPro" id="IPR000640">
    <property type="entry name" value="EFG_V-like"/>
</dbReference>
<dbReference type="InterPro" id="IPR004161">
    <property type="entry name" value="EFTu-like_2"/>
</dbReference>
<dbReference type="InterPro" id="IPR031157">
    <property type="entry name" value="G_TR_CS"/>
</dbReference>
<dbReference type="InterPro" id="IPR038363">
    <property type="entry name" value="LepA_C_sf"/>
</dbReference>
<dbReference type="InterPro" id="IPR013842">
    <property type="entry name" value="LepA_CTD"/>
</dbReference>
<dbReference type="InterPro" id="IPR035654">
    <property type="entry name" value="LepA_IV"/>
</dbReference>
<dbReference type="InterPro" id="IPR027417">
    <property type="entry name" value="P-loop_NTPase"/>
</dbReference>
<dbReference type="InterPro" id="IPR005225">
    <property type="entry name" value="Small_GTP-bd"/>
</dbReference>
<dbReference type="InterPro" id="IPR000795">
    <property type="entry name" value="T_Tr_GTP-bd_dom"/>
</dbReference>
<dbReference type="NCBIfam" id="TIGR01393">
    <property type="entry name" value="lepA"/>
    <property type="match status" value="1"/>
</dbReference>
<dbReference type="NCBIfam" id="TIGR00231">
    <property type="entry name" value="small_GTP"/>
    <property type="match status" value="1"/>
</dbReference>
<dbReference type="PANTHER" id="PTHR43512:SF4">
    <property type="entry name" value="TRANSLATION FACTOR GUF1 HOMOLOG, CHLOROPLASTIC"/>
    <property type="match status" value="1"/>
</dbReference>
<dbReference type="PANTHER" id="PTHR43512">
    <property type="entry name" value="TRANSLATION FACTOR GUF1-RELATED"/>
    <property type="match status" value="1"/>
</dbReference>
<dbReference type="Pfam" id="PF00679">
    <property type="entry name" value="EFG_C"/>
    <property type="match status" value="1"/>
</dbReference>
<dbReference type="Pfam" id="PF00009">
    <property type="entry name" value="GTP_EFTU"/>
    <property type="match status" value="1"/>
</dbReference>
<dbReference type="Pfam" id="PF03144">
    <property type="entry name" value="GTP_EFTU_D2"/>
    <property type="match status" value="1"/>
</dbReference>
<dbReference type="Pfam" id="PF06421">
    <property type="entry name" value="LepA_C"/>
    <property type="match status" value="1"/>
</dbReference>
<dbReference type="PRINTS" id="PR00315">
    <property type="entry name" value="ELONGATNFCT"/>
</dbReference>
<dbReference type="SMART" id="SM00838">
    <property type="entry name" value="EFG_C"/>
    <property type="match status" value="1"/>
</dbReference>
<dbReference type="SUPFAM" id="SSF54980">
    <property type="entry name" value="EF-G C-terminal domain-like"/>
    <property type="match status" value="2"/>
</dbReference>
<dbReference type="SUPFAM" id="SSF52540">
    <property type="entry name" value="P-loop containing nucleoside triphosphate hydrolases"/>
    <property type="match status" value="1"/>
</dbReference>
<dbReference type="PROSITE" id="PS00301">
    <property type="entry name" value="G_TR_1"/>
    <property type="match status" value="1"/>
</dbReference>
<dbReference type="PROSITE" id="PS51722">
    <property type="entry name" value="G_TR_2"/>
    <property type="match status" value="1"/>
</dbReference>
<name>LEPA_BRUSI</name>
<evidence type="ECO:0000255" key="1">
    <source>
        <dbReference type="HAMAP-Rule" id="MF_00071"/>
    </source>
</evidence>
<reference key="1">
    <citation type="submission" date="2007-12" db="EMBL/GenBank/DDBJ databases">
        <title>Brucella suis ATCC 23445 whole genome shotgun sequencing project.</title>
        <authorList>
            <person name="Setubal J.C."/>
            <person name="Bowns C."/>
            <person name="Boyle S."/>
            <person name="Crasta O.R."/>
            <person name="Czar M.J."/>
            <person name="Dharmanolla C."/>
            <person name="Gillespie J.J."/>
            <person name="Kenyon R.W."/>
            <person name="Lu J."/>
            <person name="Mane S."/>
            <person name="Mohapatra S."/>
            <person name="Nagrani S."/>
            <person name="Purkayastha A."/>
            <person name="Rajasimha H.K."/>
            <person name="Shallom J.M."/>
            <person name="Shallom S."/>
            <person name="Shukla M."/>
            <person name="Snyder E.E."/>
            <person name="Sobral B.W."/>
            <person name="Wattam A.R."/>
            <person name="Will R."/>
            <person name="Williams K."/>
            <person name="Yoo H."/>
            <person name="Bruce D."/>
            <person name="Detter C."/>
            <person name="Munk C."/>
            <person name="Brettin T.S."/>
        </authorList>
    </citation>
    <scope>NUCLEOTIDE SEQUENCE [LARGE SCALE GENOMIC DNA]</scope>
    <source>
        <strain>ATCC 23445 / NCTC 10510</strain>
    </source>
</reference>
<protein>
    <recommendedName>
        <fullName evidence="1">Elongation factor 4</fullName>
        <shortName evidence="1">EF-4</shortName>
        <ecNumber evidence="1">3.6.5.n1</ecNumber>
    </recommendedName>
    <alternativeName>
        <fullName evidence="1">Ribosomal back-translocase LepA</fullName>
    </alternativeName>
</protein>
<proteinExistence type="inferred from homology"/>
<gene>
    <name evidence="1" type="primary">lepA</name>
    <name type="ordered locus">BSUIS_B1034</name>
</gene>